<dbReference type="EC" id="2.8.4.4" evidence="1"/>
<dbReference type="EMBL" id="AE005674">
    <property type="protein sequence ID" value="AAN42418.1"/>
    <property type="molecule type" value="Genomic_DNA"/>
</dbReference>
<dbReference type="EMBL" id="AE014073">
    <property type="protein sequence ID" value="AAP16294.1"/>
    <property type="molecule type" value="Genomic_DNA"/>
</dbReference>
<dbReference type="RefSeq" id="NP_706711.1">
    <property type="nucleotide sequence ID" value="NC_004337.2"/>
</dbReference>
<dbReference type="RefSeq" id="WP_000049389.1">
    <property type="nucleotide sequence ID" value="NZ_UIPM01000046.1"/>
</dbReference>
<dbReference type="SMR" id="Q83LT1"/>
<dbReference type="STRING" id="198214.SF0785"/>
<dbReference type="PaxDb" id="198214-SF0785"/>
<dbReference type="GeneID" id="1023760"/>
<dbReference type="KEGG" id="sfl:SF0785"/>
<dbReference type="KEGG" id="sfx:S0828"/>
<dbReference type="PATRIC" id="fig|198214.7.peg.911"/>
<dbReference type="HOGENOM" id="CLU_018697_0_0_6"/>
<dbReference type="Proteomes" id="UP000001006">
    <property type="component" value="Chromosome"/>
</dbReference>
<dbReference type="Proteomes" id="UP000002673">
    <property type="component" value="Chromosome"/>
</dbReference>
<dbReference type="GO" id="GO:0005829">
    <property type="term" value="C:cytosol"/>
    <property type="evidence" value="ECO:0007669"/>
    <property type="project" value="TreeGrafter"/>
</dbReference>
<dbReference type="GO" id="GO:0051539">
    <property type="term" value="F:4 iron, 4 sulfur cluster binding"/>
    <property type="evidence" value="ECO:0007669"/>
    <property type="project" value="UniProtKB-UniRule"/>
</dbReference>
<dbReference type="GO" id="GO:0035599">
    <property type="term" value="F:aspartic acid methylthiotransferase activity"/>
    <property type="evidence" value="ECO:0007669"/>
    <property type="project" value="TreeGrafter"/>
</dbReference>
<dbReference type="GO" id="GO:0046872">
    <property type="term" value="F:metal ion binding"/>
    <property type="evidence" value="ECO:0007669"/>
    <property type="project" value="UniProtKB-KW"/>
</dbReference>
<dbReference type="GO" id="GO:0103039">
    <property type="term" value="F:protein methylthiotransferase activity"/>
    <property type="evidence" value="ECO:0007669"/>
    <property type="project" value="UniProtKB-EC"/>
</dbReference>
<dbReference type="GO" id="GO:0006400">
    <property type="term" value="P:tRNA modification"/>
    <property type="evidence" value="ECO:0007669"/>
    <property type="project" value="InterPro"/>
</dbReference>
<dbReference type="CDD" id="cd01335">
    <property type="entry name" value="Radical_SAM"/>
    <property type="match status" value="1"/>
</dbReference>
<dbReference type="FunFam" id="2.40.50.140:FF:000060">
    <property type="entry name" value="Ribosomal protein S12 methylthiotransferase RimO"/>
    <property type="match status" value="1"/>
</dbReference>
<dbReference type="FunFam" id="3.40.50.12160:FF:000002">
    <property type="entry name" value="Ribosomal protein S12 methylthiotransferase RimO"/>
    <property type="match status" value="1"/>
</dbReference>
<dbReference type="FunFam" id="3.80.30.20:FF:000001">
    <property type="entry name" value="tRNA-2-methylthio-N(6)-dimethylallyladenosine synthase 2"/>
    <property type="match status" value="1"/>
</dbReference>
<dbReference type="Gene3D" id="3.40.50.12160">
    <property type="entry name" value="Methylthiotransferase, N-terminal domain"/>
    <property type="match status" value="1"/>
</dbReference>
<dbReference type="Gene3D" id="2.40.50.140">
    <property type="entry name" value="Nucleic acid-binding proteins"/>
    <property type="match status" value="1"/>
</dbReference>
<dbReference type="Gene3D" id="3.80.30.20">
    <property type="entry name" value="tm_1862 like domain"/>
    <property type="match status" value="1"/>
</dbReference>
<dbReference type="HAMAP" id="MF_01865">
    <property type="entry name" value="MTTase_RimO"/>
    <property type="match status" value="1"/>
</dbReference>
<dbReference type="InterPro" id="IPR006638">
    <property type="entry name" value="Elp3/MiaA/NifB-like_rSAM"/>
</dbReference>
<dbReference type="InterPro" id="IPR005839">
    <property type="entry name" value="Methylthiotransferase"/>
</dbReference>
<dbReference type="InterPro" id="IPR020612">
    <property type="entry name" value="Methylthiotransferase_CS"/>
</dbReference>
<dbReference type="InterPro" id="IPR013848">
    <property type="entry name" value="Methylthiotransferase_N"/>
</dbReference>
<dbReference type="InterPro" id="IPR038135">
    <property type="entry name" value="Methylthiotransferase_N_sf"/>
</dbReference>
<dbReference type="InterPro" id="IPR012340">
    <property type="entry name" value="NA-bd_OB-fold"/>
</dbReference>
<dbReference type="InterPro" id="IPR005840">
    <property type="entry name" value="Ribosomal_uS12_MeSTrfase_RimO"/>
</dbReference>
<dbReference type="InterPro" id="IPR007197">
    <property type="entry name" value="rSAM"/>
</dbReference>
<dbReference type="InterPro" id="IPR023404">
    <property type="entry name" value="rSAM_horseshoe"/>
</dbReference>
<dbReference type="InterPro" id="IPR002792">
    <property type="entry name" value="TRAM_dom"/>
</dbReference>
<dbReference type="NCBIfam" id="TIGR01125">
    <property type="entry name" value="30S ribosomal protein S12 methylthiotransferase RimO"/>
    <property type="match status" value="1"/>
</dbReference>
<dbReference type="NCBIfam" id="TIGR00089">
    <property type="entry name" value="MiaB/RimO family radical SAM methylthiotransferase"/>
    <property type="match status" value="1"/>
</dbReference>
<dbReference type="PANTHER" id="PTHR43837">
    <property type="entry name" value="RIBOSOMAL PROTEIN S12 METHYLTHIOTRANSFERASE RIMO"/>
    <property type="match status" value="1"/>
</dbReference>
<dbReference type="PANTHER" id="PTHR43837:SF1">
    <property type="entry name" value="RIBOSOMAL PROTEIN US12 METHYLTHIOTRANSFERASE RIMO"/>
    <property type="match status" value="1"/>
</dbReference>
<dbReference type="Pfam" id="PF04055">
    <property type="entry name" value="Radical_SAM"/>
    <property type="match status" value="1"/>
</dbReference>
<dbReference type="Pfam" id="PF18693">
    <property type="entry name" value="TRAM_2"/>
    <property type="match status" value="1"/>
</dbReference>
<dbReference type="Pfam" id="PF00919">
    <property type="entry name" value="UPF0004"/>
    <property type="match status" value="1"/>
</dbReference>
<dbReference type="SFLD" id="SFLDG01082">
    <property type="entry name" value="B12-binding_domain_containing"/>
    <property type="match status" value="1"/>
</dbReference>
<dbReference type="SFLD" id="SFLDS00029">
    <property type="entry name" value="Radical_SAM"/>
    <property type="match status" value="1"/>
</dbReference>
<dbReference type="SFLD" id="SFLDF00274">
    <property type="entry name" value="ribosomal_protein_S12_methylth"/>
    <property type="match status" value="1"/>
</dbReference>
<dbReference type="SMART" id="SM00729">
    <property type="entry name" value="Elp3"/>
    <property type="match status" value="1"/>
</dbReference>
<dbReference type="SUPFAM" id="SSF102114">
    <property type="entry name" value="Radical SAM enzymes"/>
    <property type="match status" value="1"/>
</dbReference>
<dbReference type="PROSITE" id="PS51449">
    <property type="entry name" value="MTTASE_N"/>
    <property type="match status" value="1"/>
</dbReference>
<dbReference type="PROSITE" id="PS01278">
    <property type="entry name" value="MTTASE_RADICAL"/>
    <property type="match status" value="1"/>
</dbReference>
<dbReference type="PROSITE" id="PS51918">
    <property type="entry name" value="RADICAL_SAM"/>
    <property type="match status" value="1"/>
</dbReference>
<dbReference type="PROSITE" id="PS50926">
    <property type="entry name" value="TRAM"/>
    <property type="match status" value="1"/>
</dbReference>
<protein>
    <recommendedName>
        <fullName evidence="1">Ribosomal protein uS12 methylthiotransferase RimO</fullName>
        <shortName evidence="1">uS12 MTTase</shortName>
        <shortName evidence="1">uS12 methylthiotransferase</shortName>
        <ecNumber evidence="1">2.8.4.4</ecNumber>
    </recommendedName>
    <alternativeName>
        <fullName evidence="1">Ribosomal protein uS12 (aspartate-C(3))-methylthiotransferase</fullName>
    </alternativeName>
    <alternativeName>
        <fullName evidence="1">Ribosome maturation factor RimO</fullName>
    </alternativeName>
</protein>
<comment type="function">
    <text evidence="1">Catalyzes the methylthiolation of an aspartic acid residue of ribosomal protein uS12.</text>
</comment>
<comment type="catalytic activity">
    <reaction evidence="1">
        <text>L-aspartate(89)-[ribosomal protein uS12]-hydrogen + (sulfur carrier)-SH + AH2 + 2 S-adenosyl-L-methionine = 3-methylsulfanyl-L-aspartate(89)-[ribosomal protein uS12]-hydrogen + (sulfur carrier)-H + 5'-deoxyadenosine + L-methionine + A + S-adenosyl-L-homocysteine + 2 H(+)</text>
        <dbReference type="Rhea" id="RHEA:37087"/>
        <dbReference type="Rhea" id="RHEA-COMP:10460"/>
        <dbReference type="Rhea" id="RHEA-COMP:10461"/>
        <dbReference type="Rhea" id="RHEA-COMP:14737"/>
        <dbReference type="Rhea" id="RHEA-COMP:14739"/>
        <dbReference type="ChEBI" id="CHEBI:13193"/>
        <dbReference type="ChEBI" id="CHEBI:15378"/>
        <dbReference type="ChEBI" id="CHEBI:17319"/>
        <dbReference type="ChEBI" id="CHEBI:17499"/>
        <dbReference type="ChEBI" id="CHEBI:29917"/>
        <dbReference type="ChEBI" id="CHEBI:29961"/>
        <dbReference type="ChEBI" id="CHEBI:57844"/>
        <dbReference type="ChEBI" id="CHEBI:57856"/>
        <dbReference type="ChEBI" id="CHEBI:59789"/>
        <dbReference type="ChEBI" id="CHEBI:64428"/>
        <dbReference type="ChEBI" id="CHEBI:73599"/>
        <dbReference type="EC" id="2.8.4.4"/>
    </reaction>
</comment>
<comment type="cofactor">
    <cofactor evidence="1">
        <name>[4Fe-4S] cluster</name>
        <dbReference type="ChEBI" id="CHEBI:49883"/>
    </cofactor>
    <text evidence="1">Binds 2 [4Fe-4S] clusters. One cluster is coordinated with 3 cysteines and an exchangeable S-adenosyl-L-methionine.</text>
</comment>
<comment type="subcellular location">
    <subcellularLocation>
        <location evidence="1">Cytoplasm</location>
    </subcellularLocation>
</comment>
<comment type="similarity">
    <text evidence="1">Belongs to the methylthiotransferase family. RimO subfamily.</text>
</comment>
<reference key="1">
    <citation type="journal article" date="2002" name="Nucleic Acids Res.">
        <title>Genome sequence of Shigella flexneri 2a: insights into pathogenicity through comparison with genomes of Escherichia coli K12 and O157.</title>
        <authorList>
            <person name="Jin Q."/>
            <person name="Yuan Z."/>
            <person name="Xu J."/>
            <person name="Wang Y."/>
            <person name="Shen Y."/>
            <person name="Lu W."/>
            <person name="Wang J."/>
            <person name="Liu H."/>
            <person name="Yang J."/>
            <person name="Yang F."/>
            <person name="Zhang X."/>
            <person name="Zhang J."/>
            <person name="Yang G."/>
            <person name="Wu H."/>
            <person name="Qu D."/>
            <person name="Dong J."/>
            <person name="Sun L."/>
            <person name="Xue Y."/>
            <person name="Zhao A."/>
            <person name="Gao Y."/>
            <person name="Zhu J."/>
            <person name="Kan B."/>
            <person name="Ding K."/>
            <person name="Chen S."/>
            <person name="Cheng H."/>
            <person name="Yao Z."/>
            <person name="He B."/>
            <person name="Chen R."/>
            <person name="Ma D."/>
            <person name="Qiang B."/>
            <person name="Wen Y."/>
            <person name="Hou Y."/>
            <person name="Yu J."/>
        </authorList>
    </citation>
    <scope>NUCLEOTIDE SEQUENCE [LARGE SCALE GENOMIC DNA]</scope>
    <source>
        <strain>301 / Serotype 2a</strain>
    </source>
</reference>
<reference key="2">
    <citation type="journal article" date="2003" name="Infect. Immun.">
        <title>Complete genome sequence and comparative genomics of Shigella flexneri serotype 2a strain 2457T.</title>
        <authorList>
            <person name="Wei J."/>
            <person name="Goldberg M.B."/>
            <person name="Burland V."/>
            <person name="Venkatesan M.M."/>
            <person name="Deng W."/>
            <person name="Fournier G."/>
            <person name="Mayhew G.F."/>
            <person name="Plunkett G. III"/>
            <person name="Rose D.J."/>
            <person name="Darling A."/>
            <person name="Mau B."/>
            <person name="Perna N.T."/>
            <person name="Payne S.M."/>
            <person name="Runyen-Janecky L.J."/>
            <person name="Zhou S."/>
            <person name="Schwartz D.C."/>
            <person name="Blattner F.R."/>
        </authorList>
    </citation>
    <scope>NUCLEOTIDE SEQUENCE [LARGE SCALE GENOMIC DNA]</scope>
    <source>
        <strain>ATCC 700930 / 2457T / Serotype 2a</strain>
    </source>
</reference>
<feature type="chain" id="PRO_0000375011" description="Ribosomal protein uS12 methylthiotransferase RimO">
    <location>
        <begin position="1"/>
        <end position="441"/>
    </location>
</feature>
<feature type="domain" description="MTTase N-terminal" evidence="1">
    <location>
        <begin position="8"/>
        <end position="118"/>
    </location>
</feature>
<feature type="domain" description="Radical SAM core" evidence="2">
    <location>
        <begin position="136"/>
        <end position="373"/>
    </location>
</feature>
<feature type="domain" description="TRAM" evidence="1">
    <location>
        <begin position="376"/>
        <end position="441"/>
    </location>
</feature>
<feature type="binding site" evidence="1">
    <location>
        <position position="17"/>
    </location>
    <ligand>
        <name>[4Fe-4S] cluster</name>
        <dbReference type="ChEBI" id="CHEBI:49883"/>
        <label>1</label>
    </ligand>
</feature>
<feature type="binding site" evidence="1">
    <location>
        <position position="53"/>
    </location>
    <ligand>
        <name>[4Fe-4S] cluster</name>
        <dbReference type="ChEBI" id="CHEBI:49883"/>
        <label>1</label>
    </ligand>
</feature>
<feature type="binding site" evidence="1">
    <location>
        <position position="82"/>
    </location>
    <ligand>
        <name>[4Fe-4S] cluster</name>
        <dbReference type="ChEBI" id="CHEBI:49883"/>
        <label>1</label>
    </ligand>
</feature>
<feature type="binding site" evidence="1">
    <location>
        <position position="150"/>
    </location>
    <ligand>
        <name>[4Fe-4S] cluster</name>
        <dbReference type="ChEBI" id="CHEBI:49883"/>
        <label>2</label>
        <note>4Fe-4S-S-AdoMet</note>
    </ligand>
</feature>
<feature type="binding site" evidence="1">
    <location>
        <position position="154"/>
    </location>
    <ligand>
        <name>[4Fe-4S] cluster</name>
        <dbReference type="ChEBI" id="CHEBI:49883"/>
        <label>2</label>
        <note>4Fe-4S-S-AdoMet</note>
    </ligand>
</feature>
<feature type="binding site" evidence="1">
    <location>
        <position position="157"/>
    </location>
    <ligand>
        <name>[4Fe-4S] cluster</name>
        <dbReference type="ChEBI" id="CHEBI:49883"/>
        <label>2</label>
        <note>4Fe-4S-S-AdoMet</note>
    </ligand>
</feature>
<feature type="sequence conflict" description="In Ref. 2; AAP16294." evidence="3" ref="2">
    <original>V</original>
    <variation>M</variation>
    <location>
        <position position="167"/>
    </location>
</feature>
<sequence>MSKVTPQPKIGFVSLGCPKNLVDSERILTELRTEGYDVVPSYDDANMVIVNTCGFIDSAVQESLEAIGEALNENGKVIVTGCLGAKEDQIREVHPKVLEITGPHSYEQVLEHVHHYVPKPKHNPFLSLVPEQGVKLTPRHYAYLKISEGCNHRCTFCIIPSMRGDLVSRPIGEVLSEAKRLVDAGVKEILVISQDTSAYGVDVKHRTGFHNGEPVKTSMVSLCEQLSKLGIWTRLHYVYPYPHVDDVIPLMAEGKILPYLDIPLQHASPRILKLMKRPGSVDRQLARIKQWREICPELTLRSTFIVGFPGETEEDFQMLLDFLKEARLDRVGCFKYSPVEGADANALPDQVPEEVKEERWNRFMQLQQQISAERLQEKVGREILVIIDEVDEEGAIGRSMADAPEIDGAVYLNGETNVKPGDILRVKVEHADEYDLWGSRV</sequence>
<keyword id="KW-0004">4Fe-4S</keyword>
<keyword id="KW-0963">Cytoplasm</keyword>
<keyword id="KW-0408">Iron</keyword>
<keyword id="KW-0411">Iron-sulfur</keyword>
<keyword id="KW-0479">Metal-binding</keyword>
<keyword id="KW-1185">Reference proteome</keyword>
<keyword id="KW-0949">S-adenosyl-L-methionine</keyword>
<keyword id="KW-0808">Transferase</keyword>
<evidence type="ECO:0000255" key="1">
    <source>
        <dbReference type="HAMAP-Rule" id="MF_01865"/>
    </source>
</evidence>
<evidence type="ECO:0000255" key="2">
    <source>
        <dbReference type="PROSITE-ProRule" id="PRU01266"/>
    </source>
</evidence>
<evidence type="ECO:0000305" key="3"/>
<accession>Q83LT1</accession>
<accession>Q7UD83</accession>
<name>RIMO_SHIFL</name>
<gene>
    <name evidence="1" type="primary">rimO</name>
    <name type="ordered locus">SF0785</name>
    <name type="ordered locus">S0828</name>
</gene>
<proteinExistence type="inferred from homology"/>
<organism>
    <name type="scientific">Shigella flexneri</name>
    <dbReference type="NCBI Taxonomy" id="623"/>
    <lineage>
        <taxon>Bacteria</taxon>
        <taxon>Pseudomonadati</taxon>
        <taxon>Pseudomonadota</taxon>
        <taxon>Gammaproteobacteria</taxon>
        <taxon>Enterobacterales</taxon>
        <taxon>Enterobacteriaceae</taxon>
        <taxon>Shigella</taxon>
    </lineage>
</organism>